<comment type="interaction">
    <interactant intactId="EBI-9161146">
        <id>Q9LZH9</id>
    </interactant>
    <interactant intactId="EBI-4424361">
        <id>Q9SZI2</id>
        <label>NAP1;1</label>
    </interactant>
    <organismsDiffer>false</organismsDiffer>
    <experiments>3</experiments>
</comment>
<comment type="similarity">
    <text evidence="3">Belongs to the eukaryotic ribosomal protein eL8 family.</text>
</comment>
<accession>Q9LZH9</accession>
<reference key="1">
    <citation type="journal article" date="2000" name="Nature">
        <title>Sequence and analysis of chromosome 3 of the plant Arabidopsis thaliana.</title>
        <authorList>
            <person name="Salanoubat M."/>
            <person name="Lemcke K."/>
            <person name="Rieger M."/>
            <person name="Ansorge W."/>
            <person name="Unseld M."/>
            <person name="Fartmann B."/>
            <person name="Valle G."/>
            <person name="Bloecker H."/>
            <person name="Perez-Alonso M."/>
            <person name="Obermaier B."/>
            <person name="Delseny M."/>
            <person name="Boutry M."/>
            <person name="Grivell L.A."/>
            <person name="Mache R."/>
            <person name="Puigdomenech P."/>
            <person name="De Simone V."/>
            <person name="Choisne N."/>
            <person name="Artiguenave F."/>
            <person name="Robert C."/>
            <person name="Brottier P."/>
            <person name="Wincker P."/>
            <person name="Cattolico L."/>
            <person name="Weissenbach J."/>
            <person name="Saurin W."/>
            <person name="Quetier F."/>
            <person name="Schaefer M."/>
            <person name="Mueller-Auer S."/>
            <person name="Gabel C."/>
            <person name="Fuchs M."/>
            <person name="Benes V."/>
            <person name="Wurmbach E."/>
            <person name="Drzonek H."/>
            <person name="Erfle H."/>
            <person name="Jordan N."/>
            <person name="Bangert S."/>
            <person name="Wiedelmann R."/>
            <person name="Kranz H."/>
            <person name="Voss H."/>
            <person name="Holland R."/>
            <person name="Brandt P."/>
            <person name="Nyakatura G."/>
            <person name="Vezzi A."/>
            <person name="D'Angelo M."/>
            <person name="Pallavicini A."/>
            <person name="Toppo S."/>
            <person name="Simionati B."/>
            <person name="Conrad A."/>
            <person name="Hornischer K."/>
            <person name="Kauer G."/>
            <person name="Loehnert T.-H."/>
            <person name="Nordsiek G."/>
            <person name="Reichelt J."/>
            <person name="Scharfe M."/>
            <person name="Schoen O."/>
            <person name="Bargues M."/>
            <person name="Terol J."/>
            <person name="Climent J."/>
            <person name="Navarro P."/>
            <person name="Collado C."/>
            <person name="Perez-Perez A."/>
            <person name="Ottenwaelder B."/>
            <person name="Duchemin D."/>
            <person name="Cooke R."/>
            <person name="Laudie M."/>
            <person name="Berger-Llauro C."/>
            <person name="Purnelle B."/>
            <person name="Masuy D."/>
            <person name="de Haan M."/>
            <person name="Maarse A.C."/>
            <person name="Alcaraz J.-P."/>
            <person name="Cottet A."/>
            <person name="Casacuberta E."/>
            <person name="Monfort A."/>
            <person name="Argiriou A."/>
            <person name="Flores M."/>
            <person name="Liguori R."/>
            <person name="Vitale D."/>
            <person name="Mannhaupt G."/>
            <person name="Haase D."/>
            <person name="Schoof H."/>
            <person name="Rudd S."/>
            <person name="Zaccaria P."/>
            <person name="Mewes H.-W."/>
            <person name="Mayer K.F.X."/>
            <person name="Kaul S."/>
            <person name="Town C.D."/>
            <person name="Koo H.L."/>
            <person name="Tallon L.J."/>
            <person name="Jenkins J."/>
            <person name="Rooney T."/>
            <person name="Rizzo M."/>
            <person name="Walts A."/>
            <person name="Utterback T."/>
            <person name="Fujii C.Y."/>
            <person name="Shea T.P."/>
            <person name="Creasy T.H."/>
            <person name="Haas B."/>
            <person name="Maiti R."/>
            <person name="Wu D."/>
            <person name="Peterson J."/>
            <person name="Van Aken S."/>
            <person name="Pai G."/>
            <person name="Militscher J."/>
            <person name="Sellers P."/>
            <person name="Gill J.E."/>
            <person name="Feldblyum T.V."/>
            <person name="Preuss D."/>
            <person name="Lin X."/>
            <person name="Nierman W.C."/>
            <person name="Salzberg S.L."/>
            <person name="White O."/>
            <person name="Venter J.C."/>
            <person name="Fraser C.M."/>
            <person name="Kaneko T."/>
            <person name="Nakamura Y."/>
            <person name="Sato S."/>
            <person name="Kato T."/>
            <person name="Asamizu E."/>
            <person name="Sasamoto S."/>
            <person name="Kimura T."/>
            <person name="Idesawa K."/>
            <person name="Kawashima K."/>
            <person name="Kishida Y."/>
            <person name="Kiyokawa C."/>
            <person name="Kohara M."/>
            <person name="Matsumoto M."/>
            <person name="Matsuno A."/>
            <person name="Muraki A."/>
            <person name="Nakayama S."/>
            <person name="Nakazaki N."/>
            <person name="Shinpo S."/>
            <person name="Takeuchi C."/>
            <person name="Wada T."/>
            <person name="Watanabe A."/>
            <person name="Yamada M."/>
            <person name="Yasuda M."/>
            <person name="Tabata S."/>
        </authorList>
    </citation>
    <scope>NUCLEOTIDE SEQUENCE [LARGE SCALE GENOMIC DNA]</scope>
    <source>
        <strain>cv. Columbia</strain>
    </source>
</reference>
<reference key="2">
    <citation type="journal article" date="2017" name="Plant J.">
        <title>Araport11: a complete reannotation of the Arabidopsis thaliana reference genome.</title>
        <authorList>
            <person name="Cheng C.Y."/>
            <person name="Krishnakumar V."/>
            <person name="Chan A.P."/>
            <person name="Thibaud-Nissen F."/>
            <person name="Schobel S."/>
            <person name="Town C.D."/>
        </authorList>
    </citation>
    <scope>GENOME REANNOTATION</scope>
    <source>
        <strain>cv. Columbia</strain>
    </source>
</reference>
<reference key="3">
    <citation type="journal article" date="2003" name="Science">
        <title>Empirical analysis of transcriptional activity in the Arabidopsis genome.</title>
        <authorList>
            <person name="Yamada K."/>
            <person name="Lim J."/>
            <person name="Dale J.M."/>
            <person name="Chen H."/>
            <person name="Shinn P."/>
            <person name="Palm C.J."/>
            <person name="Southwick A.M."/>
            <person name="Wu H.C."/>
            <person name="Kim C.J."/>
            <person name="Nguyen M."/>
            <person name="Pham P.K."/>
            <person name="Cheuk R.F."/>
            <person name="Karlin-Newmann G."/>
            <person name="Liu S.X."/>
            <person name="Lam B."/>
            <person name="Sakano H."/>
            <person name="Wu T."/>
            <person name="Yu G."/>
            <person name="Miranda M."/>
            <person name="Quach H.L."/>
            <person name="Tripp M."/>
            <person name="Chang C.H."/>
            <person name="Lee J.M."/>
            <person name="Toriumi M.J."/>
            <person name="Chan M.M."/>
            <person name="Tang C.C."/>
            <person name="Onodera C.S."/>
            <person name="Deng J.M."/>
            <person name="Akiyama K."/>
            <person name="Ansari Y."/>
            <person name="Arakawa T."/>
            <person name="Banh J."/>
            <person name="Banno F."/>
            <person name="Bowser L."/>
            <person name="Brooks S.Y."/>
            <person name="Carninci P."/>
            <person name="Chao Q."/>
            <person name="Choy N."/>
            <person name="Enju A."/>
            <person name="Goldsmith A.D."/>
            <person name="Gurjal M."/>
            <person name="Hansen N.F."/>
            <person name="Hayashizaki Y."/>
            <person name="Johnson-Hopson C."/>
            <person name="Hsuan V.W."/>
            <person name="Iida K."/>
            <person name="Karnes M."/>
            <person name="Khan S."/>
            <person name="Koesema E."/>
            <person name="Ishida J."/>
            <person name="Jiang P.X."/>
            <person name="Jones T."/>
            <person name="Kawai J."/>
            <person name="Kamiya A."/>
            <person name="Meyers C."/>
            <person name="Nakajima M."/>
            <person name="Narusaka M."/>
            <person name="Seki M."/>
            <person name="Sakurai T."/>
            <person name="Satou M."/>
            <person name="Tamse R."/>
            <person name="Vaysberg M."/>
            <person name="Wallender E.K."/>
            <person name="Wong C."/>
            <person name="Yamamura Y."/>
            <person name="Yuan S."/>
            <person name="Shinozaki K."/>
            <person name="Davis R.W."/>
            <person name="Theologis A."/>
            <person name="Ecker J.R."/>
        </authorList>
    </citation>
    <scope>NUCLEOTIDE SEQUENCE [LARGE SCALE MRNA]</scope>
    <source>
        <strain>cv. Columbia</strain>
    </source>
</reference>
<reference key="4">
    <citation type="submission" date="2002-03" db="EMBL/GenBank/DDBJ databases">
        <title>Full-length cDNA from Arabidopsis thaliana.</title>
        <authorList>
            <person name="Brover V.V."/>
            <person name="Troukhan M.E."/>
            <person name="Alexandrov N.A."/>
            <person name="Lu Y.-P."/>
            <person name="Flavell R.B."/>
            <person name="Feldmann K.A."/>
        </authorList>
    </citation>
    <scope>NUCLEOTIDE SEQUENCE [LARGE SCALE MRNA]</scope>
</reference>
<reference key="5">
    <citation type="journal article" date="2001" name="Plant Physiol.">
        <title>The organization of cytoplasmic ribosomal protein genes in the Arabidopsis genome.</title>
        <authorList>
            <person name="Barakat A."/>
            <person name="Szick-Miranda K."/>
            <person name="Chang I.-F."/>
            <person name="Guyot R."/>
            <person name="Blanc G."/>
            <person name="Cooke R."/>
            <person name="Delseny M."/>
            <person name="Bailey-Serres J."/>
        </authorList>
    </citation>
    <scope>GENE FAMILY ORGANIZATION</scope>
    <scope>NOMENCLATURE</scope>
</reference>
<reference key="6">
    <citation type="journal article" date="2023" name="Plant Cell">
        <title>An updated nomenclature for plant ribosomal protein genes.</title>
        <authorList>
            <person name="Scarpin M.R."/>
            <person name="Busche M."/>
            <person name="Martinez R.E."/>
            <person name="Harper L.C."/>
            <person name="Reiser L."/>
            <person name="Szakonyi D."/>
            <person name="Merchante C."/>
            <person name="Lan T."/>
            <person name="Xiong W."/>
            <person name="Mo B."/>
            <person name="Tang G."/>
            <person name="Chen X."/>
            <person name="Bailey-Serres J."/>
            <person name="Browning K.S."/>
            <person name="Brunkard J.O."/>
        </authorList>
    </citation>
    <scope>NOMENCLATURE</scope>
</reference>
<feature type="chain" id="PRO_0000239926" description="Large ribosomal subunit protein eL8y">
    <location>
        <begin position="1"/>
        <end position="256"/>
    </location>
</feature>
<feature type="region of interest" description="Disordered" evidence="1">
    <location>
        <begin position="1"/>
        <end position="20"/>
    </location>
</feature>
<feature type="compositionally biased region" description="Basic residues" evidence="1">
    <location>
        <begin position="1"/>
        <end position="15"/>
    </location>
</feature>
<gene>
    <name type="primary">RPL7AB</name>
    <name type="ordered locus">At3g62870</name>
    <name type="ORF">F26K9_300</name>
</gene>
<dbReference type="EMBL" id="AL162651">
    <property type="protein sequence ID" value="CAB83137.1"/>
    <property type="molecule type" value="Genomic_DNA"/>
</dbReference>
<dbReference type="EMBL" id="CP002686">
    <property type="protein sequence ID" value="AEE80404.1"/>
    <property type="molecule type" value="Genomic_DNA"/>
</dbReference>
<dbReference type="EMBL" id="AY052264">
    <property type="protein sequence ID" value="AAK97734.1"/>
    <property type="molecule type" value="mRNA"/>
</dbReference>
<dbReference type="EMBL" id="AY060519">
    <property type="protein sequence ID" value="AAL31132.1"/>
    <property type="molecule type" value="mRNA"/>
</dbReference>
<dbReference type="EMBL" id="AY062758">
    <property type="protein sequence ID" value="AAL32836.1"/>
    <property type="molecule type" value="mRNA"/>
</dbReference>
<dbReference type="EMBL" id="AY114667">
    <property type="protein sequence ID" value="AAM47986.1"/>
    <property type="molecule type" value="mRNA"/>
</dbReference>
<dbReference type="EMBL" id="AY086353">
    <property type="protein sequence ID" value="AAM64421.1"/>
    <property type="molecule type" value="mRNA"/>
</dbReference>
<dbReference type="PIR" id="T48076">
    <property type="entry name" value="T48076"/>
</dbReference>
<dbReference type="RefSeq" id="NP_191846.1">
    <property type="nucleotide sequence ID" value="NM_116152.3"/>
</dbReference>
<dbReference type="SMR" id="Q9LZH9"/>
<dbReference type="BioGRID" id="10776">
    <property type="interactions" value="156"/>
</dbReference>
<dbReference type="FunCoup" id="Q9LZH9">
    <property type="interactions" value="3390"/>
</dbReference>
<dbReference type="IntAct" id="Q9LZH9">
    <property type="interactions" value="5"/>
</dbReference>
<dbReference type="STRING" id="3702.Q9LZH9"/>
<dbReference type="iPTMnet" id="Q9LZH9"/>
<dbReference type="PaxDb" id="3702-AT3G62870.1"/>
<dbReference type="ProteomicsDB" id="226893"/>
<dbReference type="EnsemblPlants" id="AT3G62870.1">
    <property type="protein sequence ID" value="AT3G62870.1"/>
    <property type="gene ID" value="AT3G62870"/>
</dbReference>
<dbReference type="GeneID" id="825462"/>
<dbReference type="Gramene" id="AT3G62870.1">
    <property type="protein sequence ID" value="AT3G62870.1"/>
    <property type="gene ID" value="AT3G62870"/>
</dbReference>
<dbReference type="KEGG" id="ath:AT3G62870"/>
<dbReference type="Araport" id="AT3G62870"/>
<dbReference type="TAIR" id="AT3G62870"/>
<dbReference type="eggNOG" id="KOG3166">
    <property type="taxonomic scope" value="Eukaryota"/>
</dbReference>
<dbReference type="HOGENOM" id="CLU_055193_0_1_1"/>
<dbReference type="InParanoid" id="Q9LZH9"/>
<dbReference type="OMA" id="TTLCLCG"/>
<dbReference type="OrthoDB" id="29563at2759"/>
<dbReference type="PhylomeDB" id="Q9LZH9"/>
<dbReference type="CD-CODE" id="4299E36E">
    <property type="entry name" value="Nucleolus"/>
</dbReference>
<dbReference type="PRO" id="PR:Q9LZH9"/>
<dbReference type="Proteomes" id="UP000006548">
    <property type="component" value="Chromosome 3"/>
</dbReference>
<dbReference type="ExpressionAtlas" id="Q9LZH9">
    <property type="expression patterns" value="baseline and differential"/>
</dbReference>
<dbReference type="GO" id="GO:0005829">
    <property type="term" value="C:cytosol"/>
    <property type="evidence" value="ECO:0007005"/>
    <property type="project" value="TAIR"/>
</dbReference>
<dbReference type="GO" id="GO:0022625">
    <property type="term" value="C:cytosolic large ribosomal subunit"/>
    <property type="evidence" value="ECO:0007005"/>
    <property type="project" value="TAIR"/>
</dbReference>
<dbReference type="GO" id="GO:0022626">
    <property type="term" value="C:cytosolic ribosome"/>
    <property type="evidence" value="ECO:0007005"/>
    <property type="project" value="TAIR"/>
</dbReference>
<dbReference type="GO" id="GO:0000325">
    <property type="term" value="C:plant-type vacuole"/>
    <property type="evidence" value="ECO:0007005"/>
    <property type="project" value="TAIR"/>
</dbReference>
<dbReference type="GO" id="GO:0003729">
    <property type="term" value="F:mRNA binding"/>
    <property type="evidence" value="ECO:0000314"/>
    <property type="project" value="TAIR"/>
</dbReference>
<dbReference type="GO" id="GO:0003735">
    <property type="term" value="F:structural constituent of ribosome"/>
    <property type="evidence" value="ECO:0000314"/>
    <property type="project" value="CAFA"/>
</dbReference>
<dbReference type="GO" id="GO:0042254">
    <property type="term" value="P:ribosome biogenesis"/>
    <property type="evidence" value="ECO:0007669"/>
    <property type="project" value="InterPro"/>
</dbReference>
<dbReference type="FunFam" id="3.30.1330.30:FF:000003">
    <property type="entry name" value="60S ribosomal protein L7a"/>
    <property type="match status" value="1"/>
</dbReference>
<dbReference type="Gene3D" id="3.30.1330.30">
    <property type="match status" value="1"/>
</dbReference>
<dbReference type="InterPro" id="IPR050257">
    <property type="entry name" value="eL8/uL1-like"/>
</dbReference>
<dbReference type="InterPro" id="IPR029064">
    <property type="entry name" value="Ribosomal_eL30-like_sf"/>
</dbReference>
<dbReference type="InterPro" id="IPR004037">
    <property type="entry name" value="Ribosomal_eL8-like_CS"/>
</dbReference>
<dbReference type="InterPro" id="IPR004038">
    <property type="entry name" value="Ribosomal_eL8/eL30/eS12/Gad45"/>
</dbReference>
<dbReference type="InterPro" id="IPR018492">
    <property type="entry name" value="Ribosomal_eL8/Nhp2"/>
</dbReference>
<dbReference type="InterPro" id="IPR001921">
    <property type="entry name" value="Ribosomal_eL8_euk"/>
</dbReference>
<dbReference type="PANTHER" id="PTHR23105">
    <property type="entry name" value="RIBOSOMAL PROTEIN L7AE FAMILY MEMBER"/>
    <property type="match status" value="1"/>
</dbReference>
<dbReference type="Pfam" id="PF01248">
    <property type="entry name" value="Ribosomal_L7Ae"/>
    <property type="match status" value="1"/>
</dbReference>
<dbReference type="PRINTS" id="PR00881">
    <property type="entry name" value="L7ARS6FAMILY"/>
</dbReference>
<dbReference type="PRINTS" id="PR00882">
    <property type="entry name" value="RIBOSOMALL7A"/>
</dbReference>
<dbReference type="SUPFAM" id="SSF55315">
    <property type="entry name" value="L30e-like"/>
    <property type="match status" value="1"/>
</dbReference>
<dbReference type="PROSITE" id="PS01082">
    <property type="entry name" value="RIBOSOMAL_L7AE"/>
    <property type="match status" value="1"/>
</dbReference>
<sequence length="256" mass="29034">MAPKKGVKVASKKKPEKVTNPLFERRPKQFGIGGALPPKKDLSRYIKWPKSIRLQRQKRILKQRLKVPPALNQFTKTLDKNLATSLFKILLKYRPEDKAAKKERLLNKAQAEAEGKPAESKKPIVVKYGLNHVTYLIEQNKAQLVVIAHDVDPIELVVWLPALCRKMEVPYCIVKGKSRLGAVVHQKTAAALCLTTVKNEDKLEFSKILEAIKANFNDKYEEYRKKWGGGIMGSKSQAKTKAKERVIAKEAAQRMN</sequence>
<keyword id="KW-1185">Reference proteome</keyword>
<keyword id="KW-0687">Ribonucleoprotein</keyword>
<keyword id="KW-0689">Ribosomal protein</keyword>
<name>RL7A2_ARATH</name>
<protein>
    <recommendedName>
        <fullName evidence="2">Large ribosomal subunit protein eL8y</fullName>
    </recommendedName>
    <alternativeName>
        <fullName>60S ribosomal protein L7a-2</fullName>
    </alternativeName>
</protein>
<evidence type="ECO:0000256" key="1">
    <source>
        <dbReference type="SAM" id="MobiDB-lite"/>
    </source>
</evidence>
<evidence type="ECO:0000303" key="2">
    <source>
    </source>
</evidence>
<evidence type="ECO:0000305" key="3"/>
<organism>
    <name type="scientific">Arabidopsis thaliana</name>
    <name type="common">Mouse-ear cress</name>
    <dbReference type="NCBI Taxonomy" id="3702"/>
    <lineage>
        <taxon>Eukaryota</taxon>
        <taxon>Viridiplantae</taxon>
        <taxon>Streptophyta</taxon>
        <taxon>Embryophyta</taxon>
        <taxon>Tracheophyta</taxon>
        <taxon>Spermatophyta</taxon>
        <taxon>Magnoliopsida</taxon>
        <taxon>eudicotyledons</taxon>
        <taxon>Gunneridae</taxon>
        <taxon>Pentapetalae</taxon>
        <taxon>rosids</taxon>
        <taxon>malvids</taxon>
        <taxon>Brassicales</taxon>
        <taxon>Brassicaceae</taxon>
        <taxon>Camelineae</taxon>
        <taxon>Arabidopsis</taxon>
    </lineage>
</organism>
<proteinExistence type="evidence at protein level"/>